<protein>
    <recommendedName>
        <fullName evidence="1">Large ribosomal subunit protein bL21</fullName>
    </recommendedName>
    <alternativeName>
        <fullName evidence="3">50S ribosomal protein L21</fullName>
    </alternativeName>
</protein>
<keyword id="KW-0687">Ribonucleoprotein</keyword>
<keyword id="KW-0689">Ribosomal protein</keyword>
<keyword id="KW-0694">RNA-binding</keyword>
<keyword id="KW-0699">rRNA-binding</keyword>
<dbReference type="EMBL" id="CP000111">
    <property type="protein sequence ID" value="ABB50502.1"/>
    <property type="molecule type" value="Genomic_DNA"/>
</dbReference>
<dbReference type="RefSeq" id="WP_011376986.1">
    <property type="nucleotide sequence ID" value="NC_007577.1"/>
</dbReference>
<dbReference type="SMR" id="Q319E3"/>
<dbReference type="STRING" id="74546.PMT9312_1442"/>
<dbReference type="KEGG" id="pmi:PMT9312_1442"/>
<dbReference type="eggNOG" id="COG0261">
    <property type="taxonomic scope" value="Bacteria"/>
</dbReference>
<dbReference type="HOGENOM" id="CLU_061463_6_0_3"/>
<dbReference type="OrthoDB" id="9813334at2"/>
<dbReference type="Proteomes" id="UP000002715">
    <property type="component" value="Chromosome"/>
</dbReference>
<dbReference type="GO" id="GO:0005737">
    <property type="term" value="C:cytoplasm"/>
    <property type="evidence" value="ECO:0007669"/>
    <property type="project" value="UniProtKB-ARBA"/>
</dbReference>
<dbReference type="GO" id="GO:1990904">
    <property type="term" value="C:ribonucleoprotein complex"/>
    <property type="evidence" value="ECO:0007669"/>
    <property type="project" value="UniProtKB-KW"/>
</dbReference>
<dbReference type="GO" id="GO:0005840">
    <property type="term" value="C:ribosome"/>
    <property type="evidence" value="ECO:0007669"/>
    <property type="project" value="UniProtKB-KW"/>
</dbReference>
<dbReference type="GO" id="GO:0019843">
    <property type="term" value="F:rRNA binding"/>
    <property type="evidence" value="ECO:0007669"/>
    <property type="project" value="UniProtKB-UniRule"/>
</dbReference>
<dbReference type="GO" id="GO:0003735">
    <property type="term" value="F:structural constituent of ribosome"/>
    <property type="evidence" value="ECO:0007669"/>
    <property type="project" value="InterPro"/>
</dbReference>
<dbReference type="GO" id="GO:0006412">
    <property type="term" value="P:translation"/>
    <property type="evidence" value="ECO:0007669"/>
    <property type="project" value="UniProtKB-UniRule"/>
</dbReference>
<dbReference type="HAMAP" id="MF_01363">
    <property type="entry name" value="Ribosomal_bL21"/>
    <property type="match status" value="1"/>
</dbReference>
<dbReference type="InterPro" id="IPR028909">
    <property type="entry name" value="bL21-like"/>
</dbReference>
<dbReference type="InterPro" id="IPR036164">
    <property type="entry name" value="bL21-like_sf"/>
</dbReference>
<dbReference type="InterPro" id="IPR001787">
    <property type="entry name" value="Ribosomal_bL21"/>
</dbReference>
<dbReference type="InterPro" id="IPR018258">
    <property type="entry name" value="Ribosomal_bL21_CS"/>
</dbReference>
<dbReference type="NCBIfam" id="TIGR00061">
    <property type="entry name" value="L21"/>
    <property type="match status" value="1"/>
</dbReference>
<dbReference type="PANTHER" id="PTHR21349">
    <property type="entry name" value="50S RIBOSOMAL PROTEIN L21"/>
    <property type="match status" value="1"/>
</dbReference>
<dbReference type="PANTHER" id="PTHR21349:SF0">
    <property type="entry name" value="LARGE RIBOSOMAL SUBUNIT PROTEIN BL21M"/>
    <property type="match status" value="1"/>
</dbReference>
<dbReference type="Pfam" id="PF00829">
    <property type="entry name" value="Ribosomal_L21p"/>
    <property type="match status" value="1"/>
</dbReference>
<dbReference type="SUPFAM" id="SSF141091">
    <property type="entry name" value="L21p-like"/>
    <property type="match status" value="1"/>
</dbReference>
<dbReference type="PROSITE" id="PS01169">
    <property type="entry name" value="RIBOSOMAL_L21"/>
    <property type="match status" value="1"/>
</dbReference>
<organism>
    <name type="scientific">Prochlorococcus marinus (strain MIT 9312)</name>
    <dbReference type="NCBI Taxonomy" id="74546"/>
    <lineage>
        <taxon>Bacteria</taxon>
        <taxon>Bacillati</taxon>
        <taxon>Cyanobacteriota</taxon>
        <taxon>Cyanophyceae</taxon>
        <taxon>Synechococcales</taxon>
        <taxon>Prochlorococcaceae</taxon>
        <taxon>Prochlorococcus</taxon>
    </lineage>
</organism>
<reference key="1">
    <citation type="journal article" date="2006" name="Science">
        <title>Genomic islands and the ecology and evolution of Prochlorococcus.</title>
        <authorList>
            <person name="Coleman M.L."/>
            <person name="Sullivan M.B."/>
            <person name="Martiny A.C."/>
            <person name="Steglich C."/>
            <person name="Barry K."/>
            <person name="Delong E.F."/>
            <person name="Chisholm S.W."/>
        </authorList>
    </citation>
    <scope>NUCLEOTIDE SEQUENCE [LARGE SCALE GENOMIC DNA]</scope>
    <source>
        <strain>MIT 9312</strain>
    </source>
</reference>
<gene>
    <name evidence="1" type="primary">rplU</name>
    <name evidence="1" type="synonym">rpl21</name>
    <name type="ordered locus">PMT9312_1442</name>
</gene>
<feature type="chain" id="PRO_0000269360" description="Large ribosomal subunit protein bL21">
    <location>
        <begin position="1"/>
        <end position="146"/>
    </location>
</feature>
<feature type="region of interest" description="Disordered" evidence="2">
    <location>
        <begin position="115"/>
        <end position="146"/>
    </location>
</feature>
<feature type="compositionally biased region" description="Basic and acidic residues" evidence="2">
    <location>
        <begin position="128"/>
        <end position="146"/>
    </location>
</feature>
<sequence>MTNSKNSSNNSTNGNELYAIAETSGQQFWFEVNRYYDIDRLNAKEKDKITLEKILLLKDKNSITIGKPYVKDAKIELEVVSHKRDKKILVYKMRPKKKTRRKMGHRQELTRVMVKSISLGKSAPKSSAKKETVKKETKPKSEKSTN</sequence>
<name>RL21_PROM9</name>
<accession>Q319E3</accession>
<comment type="function">
    <text evidence="1">This protein binds to 23S rRNA in the presence of protein L20.</text>
</comment>
<comment type="subunit">
    <text evidence="1">Part of the 50S ribosomal subunit. Contacts protein L20.</text>
</comment>
<comment type="similarity">
    <text evidence="1">Belongs to the bacterial ribosomal protein bL21 family.</text>
</comment>
<evidence type="ECO:0000255" key="1">
    <source>
        <dbReference type="HAMAP-Rule" id="MF_01363"/>
    </source>
</evidence>
<evidence type="ECO:0000256" key="2">
    <source>
        <dbReference type="SAM" id="MobiDB-lite"/>
    </source>
</evidence>
<evidence type="ECO:0000305" key="3"/>
<proteinExistence type="inferred from homology"/>